<reference key="1">
    <citation type="journal article" date="2015" name="Proc. Natl. Acad. Sci. U.S.A.">
        <title>Trichodesmium genome maintains abundant, widespread noncoding DNA in situ, despite oligotrophic lifestyle.</title>
        <authorList>
            <person name="Walworth N."/>
            <person name="Pfreundt U."/>
            <person name="Nelson W.C."/>
            <person name="Mincer T."/>
            <person name="Heidelberg J.F."/>
            <person name="Fu F."/>
            <person name="Waterbury J.B."/>
            <person name="Glavina del Rio T."/>
            <person name="Goodwin L."/>
            <person name="Kyrpides N.C."/>
            <person name="Land M.L."/>
            <person name="Woyke T."/>
            <person name="Hutchins D.A."/>
            <person name="Hess W.R."/>
            <person name="Webb E.A."/>
        </authorList>
    </citation>
    <scope>NUCLEOTIDE SEQUENCE [LARGE SCALE GENOMIC DNA]</scope>
    <source>
        <strain>IMS101</strain>
    </source>
</reference>
<protein>
    <recommendedName>
        <fullName evidence="1">Glycerol kinase</fullName>
        <ecNumber evidence="1">2.7.1.30</ecNumber>
    </recommendedName>
    <alternativeName>
        <fullName evidence="1">ATP:glycerol 3-phosphotransferase</fullName>
    </alternativeName>
    <alternativeName>
        <fullName evidence="1">Glycerokinase</fullName>
        <shortName evidence="1">GK</shortName>
    </alternativeName>
</protein>
<organism>
    <name type="scientific">Trichodesmium erythraeum (strain IMS101)</name>
    <dbReference type="NCBI Taxonomy" id="203124"/>
    <lineage>
        <taxon>Bacteria</taxon>
        <taxon>Bacillati</taxon>
        <taxon>Cyanobacteriota</taxon>
        <taxon>Cyanophyceae</taxon>
        <taxon>Oscillatoriophycideae</taxon>
        <taxon>Oscillatoriales</taxon>
        <taxon>Microcoleaceae</taxon>
        <taxon>Trichodesmium</taxon>
    </lineage>
</organism>
<evidence type="ECO:0000255" key="1">
    <source>
        <dbReference type="HAMAP-Rule" id="MF_00186"/>
    </source>
</evidence>
<sequence>MTTNTEKYILALDLGTTGNRAILFNSQGASVAQAYKELSQYYPHPGWLEHNAEEIWEDTYAMIKDVFRDTGVSSSNVEAIGLTVQRETCLLWDKTTGKPLHKAIVWQDRRTASLCQELAAKGEAEKIKTRTGLVLDAYFSATKLSWLLDWVKEEKPNLDLKNVLAGTIDTWVLWKLTGGKVHATDHSNASRTMLMNIESLNWDQELLDLFQIPREMMPQIQPSFSIFGKSEPDLLGGSIPIAAVLGDQQAALFAHGCNFPGMSKCTYGTGSFLIANTGNHVTKSQNQLLSTIAWTQLVKGKLQATYALEGAMFTTGACIQWLRDGIKLIDSVAETENLALQVEDTNGVYFVPALSGLGAPHWDMDARGAILGITGGVQRENIIRAVLESIAFQVKEVVDAVNKDSGIPMSHLKVDGGVSQNNFLMQYQANLLGIPVERPAFIDATAQGAAFAAGLTIGLWNNYQKLLSNNKVGQVFEPNKNATKVQESFVVWQKAVSRAKNWIN</sequence>
<keyword id="KW-0067">ATP-binding</keyword>
<keyword id="KW-0319">Glycerol metabolism</keyword>
<keyword id="KW-0418">Kinase</keyword>
<keyword id="KW-0547">Nucleotide-binding</keyword>
<keyword id="KW-0808">Transferase</keyword>
<dbReference type="EC" id="2.7.1.30" evidence="1"/>
<dbReference type="EMBL" id="CP000393">
    <property type="protein sequence ID" value="ABG52855.1"/>
    <property type="molecule type" value="Genomic_DNA"/>
</dbReference>
<dbReference type="RefSeq" id="WP_011613185.1">
    <property type="nucleotide sequence ID" value="NC_008312.1"/>
</dbReference>
<dbReference type="SMR" id="Q10Y19"/>
<dbReference type="STRING" id="203124.Tery_3810"/>
<dbReference type="KEGG" id="ter:Tery_3810"/>
<dbReference type="eggNOG" id="COG0554">
    <property type="taxonomic scope" value="Bacteria"/>
</dbReference>
<dbReference type="HOGENOM" id="CLU_009281_2_3_3"/>
<dbReference type="OrthoDB" id="9805576at2"/>
<dbReference type="UniPathway" id="UPA00618">
    <property type="reaction ID" value="UER00672"/>
</dbReference>
<dbReference type="GO" id="GO:0005829">
    <property type="term" value="C:cytosol"/>
    <property type="evidence" value="ECO:0007669"/>
    <property type="project" value="TreeGrafter"/>
</dbReference>
<dbReference type="GO" id="GO:0005524">
    <property type="term" value="F:ATP binding"/>
    <property type="evidence" value="ECO:0007669"/>
    <property type="project" value="UniProtKB-UniRule"/>
</dbReference>
<dbReference type="GO" id="GO:0004370">
    <property type="term" value="F:glycerol kinase activity"/>
    <property type="evidence" value="ECO:0000250"/>
    <property type="project" value="UniProtKB"/>
</dbReference>
<dbReference type="GO" id="GO:0019563">
    <property type="term" value="P:glycerol catabolic process"/>
    <property type="evidence" value="ECO:0007669"/>
    <property type="project" value="UniProtKB-UniRule"/>
</dbReference>
<dbReference type="GO" id="GO:0006071">
    <property type="term" value="P:glycerol metabolic process"/>
    <property type="evidence" value="ECO:0000250"/>
    <property type="project" value="UniProtKB"/>
</dbReference>
<dbReference type="GO" id="GO:0006072">
    <property type="term" value="P:glycerol-3-phosphate metabolic process"/>
    <property type="evidence" value="ECO:0007669"/>
    <property type="project" value="InterPro"/>
</dbReference>
<dbReference type="CDD" id="cd07769">
    <property type="entry name" value="ASKHA_NBD_FGGY_GK"/>
    <property type="match status" value="1"/>
</dbReference>
<dbReference type="FunFam" id="3.30.420.40:FF:000007">
    <property type="entry name" value="Glycerol kinase"/>
    <property type="match status" value="1"/>
</dbReference>
<dbReference type="FunFam" id="3.30.420.40:FF:000008">
    <property type="entry name" value="Glycerol kinase"/>
    <property type="match status" value="1"/>
</dbReference>
<dbReference type="Gene3D" id="3.30.420.40">
    <property type="match status" value="2"/>
</dbReference>
<dbReference type="HAMAP" id="MF_00186">
    <property type="entry name" value="Glycerol_kin"/>
    <property type="match status" value="1"/>
</dbReference>
<dbReference type="InterPro" id="IPR043129">
    <property type="entry name" value="ATPase_NBD"/>
</dbReference>
<dbReference type="InterPro" id="IPR000577">
    <property type="entry name" value="Carb_kinase_FGGY"/>
</dbReference>
<dbReference type="InterPro" id="IPR018483">
    <property type="entry name" value="Carb_kinase_FGGY_CS"/>
</dbReference>
<dbReference type="InterPro" id="IPR018485">
    <property type="entry name" value="FGGY_C"/>
</dbReference>
<dbReference type="InterPro" id="IPR018484">
    <property type="entry name" value="FGGY_N"/>
</dbReference>
<dbReference type="InterPro" id="IPR005999">
    <property type="entry name" value="Glycerol_kin"/>
</dbReference>
<dbReference type="NCBIfam" id="TIGR01311">
    <property type="entry name" value="glycerol_kin"/>
    <property type="match status" value="1"/>
</dbReference>
<dbReference type="NCBIfam" id="NF000756">
    <property type="entry name" value="PRK00047.1"/>
    <property type="match status" value="1"/>
</dbReference>
<dbReference type="PANTHER" id="PTHR10196:SF69">
    <property type="entry name" value="GLYCEROL KINASE"/>
    <property type="match status" value="1"/>
</dbReference>
<dbReference type="PANTHER" id="PTHR10196">
    <property type="entry name" value="SUGAR KINASE"/>
    <property type="match status" value="1"/>
</dbReference>
<dbReference type="Pfam" id="PF02782">
    <property type="entry name" value="FGGY_C"/>
    <property type="match status" value="1"/>
</dbReference>
<dbReference type="Pfam" id="PF00370">
    <property type="entry name" value="FGGY_N"/>
    <property type="match status" value="1"/>
</dbReference>
<dbReference type="PIRSF" id="PIRSF000538">
    <property type="entry name" value="GlpK"/>
    <property type="match status" value="1"/>
</dbReference>
<dbReference type="SUPFAM" id="SSF53067">
    <property type="entry name" value="Actin-like ATPase domain"/>
    <property type="match status" value="2"/>
</dbReference>
<dbReference type="PROSITE" id="PS00445">
    <property type="entry name" value="FGGY_KINASES_2"/>
    <property type="match status" value="1"/>
</dbReference>
<accession>Q10Y19</accession>
<gene>
    <name evidence="1" type="primary">glpK</name>
    <name type="ordered locus">Tery_3810</name>
</gene>
<proteinExistence type="inferred from homology"/>
<comment type="function">
    <text evidence="1">Key enzyme in the regulation of glycerol uptake and metabolism. Catalyzes the phosphorylation of glycerol to yield sn-glycerol 3-phosphate.</text>
</comment>
<comment type="catalytic activity">
    <reaction evidence="1">
        <text>glycerol + ATP = sn-glycerol 3-phosphate + ADP + H(+)</text>
        <dbReference type="Rhea" id="RHEA:21644"/>
        <dbReference type="ChEBI" id="CHEBI:15378"/>
        <dbReference type="ChEBI" id="CHEBI:17754"/>
        <dbReference type="ChEBI" id="CHEBI:30616"/>
        <dbReference type="ChEBI" id="CHEBI:57597"/>
        <dbReference type="ChEBI" id="CHEBI:456216"/>
        <dbReference type="EC" id="2.7.1.30"/>
    </reaction>
</comment>
<comment type="activity regulation">
    <text evidence="1">Inhibited by fructose 1,6-bisphosphate (FBP).</text>
</comment>
<comment type="pathway">
    <text evidence="1">Polyol metabolism; glycerol degradation via glycerol kinase pathway; sn-glycerol 3-phosphate from glycerol: step 1/1.</text>
</comment>
<comment type="similarity">
    <text evidence="1">Belongs to the FGGY kinase family.</text>
</comment>
<name>GLPK_TRIEI</name>
<feature type="chain" id="PRO_1000020808" description="Glycerol kinase">
    <location>
        <begin position="1"/>
        <end position="504"/>
    </location>
</feature>
<feature type="binding site" evidence="1">
    <location>
        <position position="16"/>
    </location>
    <ligand>
        <name>ADP</name>
        <dbReference type="ChEBI" id="CHEBI:456216"/>
    </ligand>
</feature>
<feature type="binding site" evidence="1">
    <location>
        <position position="16"/>
    </location>
    <ligand>
        <name>ATP</name>
        <dbReference type="ChEBI" id="CHEBI:30616"/>
    </ligand>
</feature>
<feature type="binding site" evidence="1">
    <location>
        <position position="16"/>
    </location>
    <ligand>
        <name>sn-glycerol 3-phosphate</name>
        <dbReference type="ChEBI" id="CHEBI:57597"/>
    </ligand>
</feature>
<feature type="binding site" evidence="1">
    <location>
        <position position="17"/>
    </location>
    <ligand>
        <name>ATP</name>
        <dbReference type="ChEBI" id="CHEBI:30616"/>
    </ligand>
</feature>
<feature type="binding site" evidence="1">
    <location>
        <position position="20"/>
    </location>
    <ligand>
        <name>ADP</name>
        <dbReference type="ChEBI" id="CHEBI:456216"/>
    </ligand>
</feature>
<feature type="binding site" evidence="1">
    <location>
        <position position="86"/>
    </location>
    <ligand>
        <name>glycerol</name>
        <dbReference type="ChEBI" id="CHEBI:17754"/>
    </ligand>
</feature>
<feature type="binding site" evidence="1">
    <location>
        <position position="86"/>
    </location>
    <ligand>
        <name>sn-glycerol 3-phosphate</name>
        <dbReference type="ChEBI" id="CHEBI:57597"/>
    </ligand>
</feature>
<feature type="binding site" evidence="1">
    <location>
        <position position="87"/>
    </location>
    <ligand>
        <name>glycerol</name>
        <dbReference type="ChEBI" id="CHEBI:17754"/>
    </ligand>
</feature>
<feature type="binding site" evidence="1">
    <location>
        <position position="87"/>
    </location>
    <ligand>
        <name>sn-glycerol 3-phosphate</name>
        <dbReference type="ChEBI" id="CHEBI:57597"/>
    </ligand>
</feature>
<feature type="binding site" evidence="1">
    <location>
        <position position="138"/>
    </location>
    <ligand>
        <name>glycerol</name>
        <dbReference type="ChEBI" id="CHEBI:17754"/>
    </ligand>
</feature>
<feature type="binding site" evidence="1">
    <location>
        <position position="138"/>
    </location>
    <ligand>
        <name>sn-glycerol 3-phosphate</name>
        <dbReference type="ChEBI" id="CHEBI:57597"/>
    </ligand>
</feature>
<feature type="binding site" evidence="1">
    <location>
        <position position="247"/>
    </location>
    <ligand>
        <name>glycerol</name>
        <dbReference type="ChEBI" id="CHEBI:17754"/>
    </ligand>
</feature>
<feature type="binding site" evidence="1">
    <location>
        <position position="247"/>
    </location>
    <ligand>
        <name>sn-glycerol 3-phosphate</name>
        <dbReference type="ChEBI" id="CHEBI:57597"/>
    </ligand>
</feature>
<feature type="binding site" evidence="1">
    <location>
        <position position="248"/>
    </location>
    <ligand>
        <name>glycerol</name>
        <dbReference type="ChEBI" id="CHEBI:17754"/>
    </ligand>
</feature>
<feature type="binding site" evidence="1">
    <location>
        <position position="269"/>
    </location>
    <ligand>
        <name>ADP</name>
        <dbReference type="ChEBI" id="CHEBI:456216"/>
    </ligand>
</feature>
<feature type="binding site" evidence="1">
    <location>
        <position position="269"/>
    </location>
    <ligand>
        <name>ATP</name>
        <dbReference type="ChEBI" id="CHEBI:30616"/>
    </ligand>
</feature>
<feature type="binding site" evidence="1">
    <location>
        <position position="316"/>
    </location>
    <ligand>
        <name>ADP</name>
        <dbReference type="ChEBI" id="CHEBI:456216"/>
    </ligand>
</feature>
<feature type="binding site" evidence="1">
    <location>
        <position position="316"/>
    </location>
    <ligand>
        <name>ATP</name>
        <dbReference type="ChEBI" id="CHEBI:30616"/>
    </ligand>
</feature>
<feature type="binding site" evidence="1">
    <location>
        <position position="320"/>
    </location>
    <ligand>
        <name>ATP</name>
        <dbReference type="ChEBI" id="CHEBI:30616"/>
    </ligand>
</feature>
<feature type="binding site" evidence="1">
    <location>
        <position position="417"/>
    </location>
    <ligand>
        <name>ADP</name>
        <dbReference type="ChEBI" id="CHEBI:456216"/>
    </ligand>
</feature>
<feature type="binding site" evidence="1">
    <location>
        <position position="417"/>
    </location>
    <ligand>
        <name>ATP</name>
        <dbReference type="ChEBI" id="CHEBI:30616"/>
    </ligand>
</feature>
<feature type="binding site" evidence="1">
    <location>
        <position position="421"/>
    </location>
    <ligand>
        <name>ADP</name>
        <dbReference type="ChEBI" id="CHEBI:456216"/>
    </ligand>
</feature>